<sequence>MCRIRTFRLRRKRRVSGRSFCRSRIDPGYVRERPYIGGRSRPTTFHLTRKKKAPLGGDLSPSFARSPVLEPSSPPQALSVPSLSSEKKTASPTCVKHHLSGGAVRRANTVVPRTKKRTSRHHTLMSTTCRCWSSSIVLYEHLDARVSDVGKTSRRRRCSLGGTLSGSIISIVAKRDCDYDEPHHLFFMLLLYKRLMSTTLGISHLVKHARFSSLQGTLGSLKGTVYRPKQKTHTCNRSTTSNDTKTQSYNALFMERTWNKKTIAARAKPKPSGEAGASFPTQSLGSLSSFFFPDSLKNHRHSPMTRNQLLEHKRSQQVETNKLDDAITLYCVYIDRCEFVGKKRRCMMHNDRETGDCSSLPNANTQTHRFPSPHKEMRPPPTNEADSCSSYDGALARRASSPLREGTSGSSAHRPKQQCLLHCHQSISCILFPPNSSPQHQFALLRKVVATAAAATGRSSSPRPQTLYMCRKCVNTCYCPMRLVHRYMFQNLLIHLRAHRLGVSSSSNWPTFSTTVVNPCTTTPIKTTSSSSPRPRNDTRSPPILGMCF</sequence>
<keyword id="KW-0238">DNA-binding</keyword>
<keyword id="KW-0597">Phosphoprotein</keyword>
<protein>
    <recommendedName>
        <fullName>Tegument protein</fullName>
    </recommendedName>
    <alternativeName>
        <fullName>67 kDa phosphorylated protein</fullName>
    </alternativeName>
</protein>
<dbReference type="EMBL" id="M11911">
    <property type="protein sequence ID" value="AAA45986.1"/>
    <property type="molecule type" value="Genomic_DNA"/>
</dbReference>
<dbReference type="PIR" id="A25316">
    <property type="entry name" value="TEBEHC"/>
</dbReference>
<dbReference type="GO" id="GO:0003677">
    <property type="term" value="F:DNA binding"/>
    <property type="evidence" value="ECO:0007669"/>
    <property type="project" value="UniProtKB-KW"/>
</dbReference>
<comment type="function">
    <text>This viral structural protein may have important functions, such as protein kinase activity, DNA binding, and possible transcriptional activation of immediate-early genes.</text>
</comment>
<comment type="miscellaneous">
    <text>The tegument is a granular zone surrounding the capsid.</text>
</comment>
<evidence type="ECO:0000256" key="1">
    <source>
        <dbReference type="SAM" id="MobiDB-lite"/>
    </source>
</evidence>
<organismHost>
    <name type="scientific">Homo sapiens</name>
    <name type="common">Human</name>
    <dbReference type="NCBI Taxonomy" id="9606"/>
</organismHost>
<organism>
    <name type="scientific">Human cytomegalovirus</name>
    <name type="common">HHV-5</name>
    <name type="synonym">Human herpesvirus 5</name>
    <dbReference type="NCBI Taxonomy" id="10359"/>
    <lineage>
        <taxon>Viruses</taxon>
        <taxon>Duplodnaviria</taxon>
        <taxon>Heunggongvirae</taxon>
        <taxon>Peploviricota</taxon>
        <taxon>Herviviricetes</taxon>
        <taxon>Herpesvirales</taxon>
        <taxon>Orthoherpesviridae</taxon>
        <taxon>Betaherpesvirinae</taxon>
        <taxon>Cytomegalovirus</taxon>
        <taxon>Cytomegalovirus humanbeta5</taxon>
    </lineage>
</organism>
<feature type="chain" id="PRO_0000115245" description="Tegument protein">
    <location>
        <begin position="1"/>
        <end position="549"/>
    </location>
</feature>
<feature type="region of interest" description="Disordered" evidence="1">
    <location>
        <begin position="50"/>
        <end position="92"/>
    </location>
</feature>
<feature type="region of interest" description="Disordered" evidence="1">
    <location>
        <begin position="353"/>
        <end position="391"/>
    </location>
</feature>
<feature type="region of interest" description="Disordered" evidence="1">
    <location>
        <begin position="523"/>
        <end position="542"/>
    </location>
</feature>
<feature type="compositionally biased region" description="Polar residues" evidence="1">
    <location>
        <begin position="75"/>
        <end position="84"/>
    </location>
</feature>
<feature type="compositionally biased region" description="Polar residues" evidence="1">
    <location>
        <begin position="356"/>
        <end position="369"/>
    </location>
</feature>
<feature type="compositionally biased region" description="Low complexity" evidence="1">
    <location>
        <begin position="523"/>
        <end position="534"/>
    </location>
</feature>
<reference key="1">
    <citation type="journal article" date="1985" name="J. Virol.">
        <title>Nucleotide sequence of a human cytomegalovirus DNA fragment encoding a 67-kilodalton phosphorylated viral protein.</title>
        <authorList>
            <person name="Davis M.G."/>
            <person name="Huang E.-S."/>
        </authorList>
    </citation>
    <scope>NUCLEOTIDE SEQUENCE [GENOMIC DNA]</scope>
</reference>
<accession>P07387</accession>
<name>TEGU_HCMV</name>
<proteinExistence type="predicted"/>